<protein>
    <recommendedName>
        <fullName evidence="1">2-dehydropantoate 2-reductase</fullName>
        <ecNumber evidence="1">1.1.1.169</ecNumber>
    </recommendedName>
    <alternativeName>
        <fullName evidence="1">Ketopantoate reductase</fullName>
        <shortName evidence="1">KPR</shortName>
    </alternativeName>
</protein>
<name>PANE_MYCTO</name>
<gene>
    <name type="ordered locus">MT2649</name>
</gene>
<comment type="function">
    <text evidence="1">Catalyzes the NADPH-dependent reduction of ketopantoate into pantoic acid.</text>
</comment>
<comment type="catalytic activity">
    <reaction evidence="1">
        <text>(R)-pantoate + NADP(+) = 2-dehydropantoate + NADPH + H(+)</text>
        <dbReference type="Rhea" id="RHEA:16233"/>
        <dbReference type="ChEBI" id="CHEBI:11561"/>
        <dbReference type="ChEBI" id="CHEBI:15378"/>
        <dbReference type="ChEBI" id="CHEBI:15980"/>
        <dbReference type="ChEBI" id="CHEBI:57783"/>
        <dbReference type="ChEBI" id="CHEBI:58349"/>
        <dbReference type="EC" id="1.1.1.169"/>
    </reaction>
</comment>
<comment type="pathway">
    <text evidence="1">Cofactor biosynthesis; (R)-pantothenate biosynthesis; (R)-pantoate from 3-methyl-2-oxobutanoate: step 2/2.</text>
</comment>
<comment type="subcellular location">
    <subcellularLocation>
        <location evidence="1">Cytoplasm</location>
    </subcellularLocation>
</comment>
<comment type="similarity">
    <text evidence="2">Belongs to the ketopantoate reductase family.</text>
</comment>
<comment type="sequence caution" evidence="2">
    <conflict type="erroneous initiation">
        <sequence resource="EMBL-CDS" id="AAK46962"/>
    </conflict>
</comment>
<evidence type="ECO:0000250" key="1">
    <source>
        <dbReference type="UniProtKB" id="P0A9J4"/>
    </source>
</evidence>
<evidence type="ECO:0000305" key="2"/>
<keyword id="KW-0963">Cytoplasm</keyword>
<keyword id="KW-0521">NADP</keyword>
<keyword id="KW-0560">Oxidoreductase</keyword>
<keyword id="KW-0566">Pantothenate biosynthesis</keyword>
<keyword id="KW-1185">Reference proteome</keyword>
<reference key="1">
    <citation type="journal article" date="2002" name="J. Bacteriol.">
        <title>Whole-genome comparison of Mycobacterium tuberculosis clinical and laboratory strains.</title>
        <authorList>
            <person name="Fleischmann R.D."/>
            <person name="Alland D."/>
            <person name="Eisen J.A."/>
            <person name="Carpenter L."/>
            <person name="White O."/>
            <person name="Peterson J.D."/>
            <person name="DeBoy R.T."/>
            <person name="Dodson R.J."/>
            <person name="Gwinn M.L."/>
            <person name="Haft D.H."/>
            <person name="Hickey E.K."/>
            <person name="Kolonay J.F."/>
            <person name="Nelson W.C."/>
            <person name="Umayam L.A."/>
            <person name="Ermolaeva M.D."/>
            <person name="Salzberg S.L."/>
            <person name="Delcher A."/>
            <person name="Utterback T.R."/>
            <person name="Weidman J.F."/>
            <person name="Khouri H.M."/>
            <person name="Gill J."/>
            <person name="Mikula A."/>
            <person name="Bishai W."/>
            <person name="Jacobs W.R. Jr."/>
            <person name="Venter J.C."/>
            <person name="Fraser C.M."/>
        </authorList>
    </citation>
    <scope>NUCLEOTIDE SEQUENCE [LARGE SCALE GENOMIC DNA]</scope>
    <source>
        <strain>CDC 1551 / Oshkosh</strain>
    </source>
</reference>
<feature type="chain" id="PRO_0000427988" description="2-dehydropantoate 2-reductase">
    <location>
        <begin position="1"/>
        <end position="295"/>
    </location>
</feature>
<feature type="active site" description="Proton donor" evidence="1">
    <location>
        <position position="177"/>
    </location>
</feature>
<feature type="binding site" evidence="1">
    <location>
        <begin position="9"/>
        <end position="14"/>
    </location>
    <ligand>
        <name>NADP(+)</name>
        <dbReference type="ChEBI" id="CHEBI:58349"/>
    </ligand>
</feature>
<feature type="binding site" evidence="1">
    <location>
        <position position="100"/>
    </location>
    <ligand>
        <name>NADP(+)</name>
        <dbReference type="ChEBI" id="CHEBI:58349"/>
    </ligand>
</feature>
<feature type="binding site" evidence="1">
    <location>
        <position position="100"/>
    </location>
    <ligand>
        <name>substrate</name>
    </ligand>
</feature>
<feature type="binding site" evidence="1">
    <location>
        <position position="126"/>
    </location>
    <ligand>
        <name>NADP(+)</name>
        <dbReference type="ChEBI" id="CHEBI:58349"/>
    </ligand>
</feature>
<feature type="binding site" evidence="1">
    <location>
        <position position="181"/>
    </location>
    <ligand>
        <name>substrate</name>
    </ligand>
</feature>
<feature type="binding site" evidence="1">
    <location>
        <position position="246"/>
    </location>
    <ligand>
        <name>substrate</name>
    </ligand>
</feature>
<feature type="binding site" evidence="1">
    <location>
        <position position="258"/>
    </location>
    <ligand>
        <name>NADP(+)</name>
        <dbReference type="ChEBI" id="CHEBI:58349"/>
    </ligand>
</feature>
<dbReference type="EC" id="1.1.1.169" evidence="1"/>
<dbReference type="EMBL" id="AE000516">
    <property type="protein sequence ID" value="AAK46962.1"/>
    <property type="status" value="ALT_INIT"/>
    <property type="molecule type" value="Genomic_DNA"/>
</dbReference>
<dbReference type="PIR" id="D70724">
    <property type="entry name" value="D70724"/>
</dbReference>
<dbReference type="SMR" id="P9WIL0"/>
<dbReference type="KEGG" id="mtc:MT2649"/>
<dbReference type="HOGENOM" id="CLU_031468_4_0_11"/>
<dbReference type="UniPathway" id="UPA00028">
    <property type="reaction ID" value="UER00004"/>
</dbReference>
<dbReference type="Proteomes" id="UP000001020">
    <property type="component" value="Chromosome"/>
</dbReference>
<dbReference type="GO" id="GO:0005737">
    <property type="term" value="C:cytoplasm"/>
    <property type="evidence" value="ECO:0007669"/>
    <property type="project" value="UniProtKB-SubCell"/>
</dbReference>
<dbReference type="GO" id="GO:0008677">
    <property type="term" value="F:2-dehydropantoate 2-reductase activity"/>
    <property type="evidence" value="ECO:0007669"/>
    <property type="project" value="UniProtKB-EC"/>
</dbReference>
<dbReference type="GO" id="GO:0050661">
    <property type="term" value="F:NADP binding"/>
    <property type="evidence" value="ECO:0007669"/>
    <property type="project" value="TreeGrafter"/>
</dbReference>
<dbReference type="GO" id="GO:0015940">
    <property type="term" value="P:pantothenate biosynthetic process"/>
    <property type="evidence" value="ECO:0007669"/>
    <property type="project" value="UniProtKB-UniPathway"/>
</dbReference>
<dbReference type="Gene3D" id="1.10.1040.10">
    <property type="entry name" value="N-(1-d-carboxylethyl)-l-norvaline Dehydrogenase, domain 2"/>
    <property type="match status" value="1"/>
</dbReference>
<dbReference type="Gene3D" id="3.40.50.720">
    <property type="entry name" value="NAD(P)-binding Rossmann-like Domain"/>
    <property type="match status" value="1"/>
</dbReference>
<dbReference type="InterPro" id="IPR008927">
    <property type="entry name" value="6-PGluconate_DH-like_C_sf"/>
</dbReference>
<dbReference type="InterPro" id="IPR013328">
    <property type="entry name" value="6PGD_dom2"/>
</dbReference>
<dbReference type="InterPro" id="IPR003710">
    <property type="entry name" value="ApbA"/>
</dbReference>
<dbReference type="InterPro" id="IPR050838">
    <property type="entry name" value="Ketopantoate_reductase"/>
</dbReference>
<dbReference type="InterPro" id="IPR013752">
    <property type="entry name" value="KPA_reductase"/>
</dbReference>
<dbReference type="InterPro" id="IPR013332">
    <property type="entry name" value="KPR_N"/>
</dbReference>
<dbReference type="InterPro" id="IPR036291">
    <property type="entry name" value="NAD(P)-bd_dom_sf"/>
</dbReference>
<dbReference type="NCBIfam" id="TIGR00745">
    <property type="entry name" value="apbA_panE"/>
    <property type="match status" value="1"/>
</dbReference>
<dbReference type="NCBIfam" id="NF005091">
    <property type="entry name" value="PRK06522.2-2"/>
    <property type="match status" value="1"/>
</dbReference>
<dbReference type="NCBIfam" id="NF009541">
    <property type="entry name" value="PRK12921.1-1"/>
    <property type="match status" value="1"/>
</dbReference>
<dbReference type="PANTHER" id="PTHR43765:SF2">
    <property type="entry name" value="2-DEHYDROPANTOATE 2-REDUCTASE"/>
    <property type="match status" value="1"/>
</dbReference>
<dbReference type="PANTHER" id="PTHR43765">
    <property type="entry name" value="2-DEHYDROPANTOATE 2-REDUCTASE-RELATED"/>
    <property type="match status" value="1"/>
</dbReference>
<dbReference type="Pfam" id="PF02558">
    <property type="entry name" value="ApbA"/>
    <property type="match status" value="1"/>
</dbReference>
<dbReference type="Pfam" id="PF08546">
    <property type="entry name" value="ApbA_C"/>
    <property type="match status" value="1"/>
</dbReference>
<dbReference type="SUPFAM" id="SSF48179">
    <property type="entry name" value="6-phosphogluconate dehydrogenase C-terminal domain-like"/>
    <property type="match status" value="1"/>
</dbReference>
<dbReference type="SUPFAM" id="SSF51735">
    <property type="entry name" value="NAD(P)-binding Rossmann-fold domains"/>
    <property type="match status" value="1"/>
</dbReference>
<sequence>MATGIALVGPGAVGTTVAALLHKAGYSPLLCGHTPRAGIELRRDGADPIVVPGPVHTSPREVAGPVDVLILAVKATQNDAARPWLTRLCDERTVVAVLQNGVEQVEQVQPHCPSSAVVPAIVWCSAETQPQGWVRLRGEAALVVPTGPAAEQFAGLLRGAGATVDCDPDFTTAAWRKLLVNALAGFMVLSGRRSAMFRRDDVAALSRRYVAECLAVARAEGARLDDDVVDEVVRLVRSAPQDMGTSMLADRAAHRPLEWDLRNGVIVRKARAHGLATPISDVLVPLLAAASDGPG</sequence>
<organism>
    <name type="scientific">Mycobacterium tuberculosis (strain CDC 1551 / Oshkosh)</name>
    <dbReference type="NCBI Taxonomy" id="83331"/>
    <lineage>
        <taxon>Bacteria</taxon>
        <taxon>Bacillati</taxon>
        <taxon>Actinomycetota</taxon>
        <taxon>Actinomycetes</taxon>
        <taxon>Mycobacteriales</taxon>
        <taxon>Mycobacteriaceae</taxon>
        <taxon>Mycobacterium</taxon>
        <taxon>Mycobacterium tuberculosis complex</taxon>
    </lineage>
</organism>
<accession>P9WIL0</accession>
<accession>L0TBN6</accession>
<accession>Q50648</accession>
<proteinExistence type="inferred from homology"/>